<organism>
    <name type="scientific">Synechococcus sp. (strain JA-3-3Ab)</name>
    <name type="common">Cyanobacteria bacterium Yellowstone A-Prime</name>
    <dbReference type="NCBI Taxonomy" id="321327"/>
    <lineage>
        <taxon>Bacteria</taxon>
        <taxon>Bacillati</taxon>
        <taxon>Cyanobacteriota</taxon>
        <taxon>Cyanophyceae</taxon>
        <taxon>Synechococcales</taxon>
        <taxon>Synechococcaceae</taxon>
        <taxon>Synechococcus</taxon>
    </lineage>
</organism>
<gene>
    <name type="ordered locus">CYA_0950</name>
</gene>
<comment type="similarity">
    <text evidence="1">Belongs to the LarC family.</text>
</comment>
<accession>Q2JVS9</accession>
<keyword id="KW-0533">Nickel</keyword>
<proteinExistence type="inferred from homology"/>
<dbReference type="EMBL" id="CP000239">
    <property type="protein sequence ID" value="ABC99152.1"/>
    <property type="molecule type" value="Genomic_DNA"/>
</dbReference>
<dbReference type="RefSeq" id="WP_011429835.1">
    <property type="nucleotide sequence ID" value="NC_007775.1"/>
</dbReference>
<dbReference type="SMR" id="Q2JVS9"/>
<dbReference type="STRING" id="321327.CYA_0950"/>
<dbReference type="KEGG" id="cya:CYA_0950"/>
<dbReference type="eggNOG" id="COG1641">
    <property type="taxonomic scope" value="Bacteria"/>
</dbReference>
<dbReference type="HOGENOM" id="CLU_028523_2_1_3"/>
<dbReference type="OrthoDB" id="9765625at2"/>
<dbReference type="Proteomes" id="UP000008818">
    <property type="component" value="Chromosome"/>
</dbReference>
<dbReference type="GO" id="GO:0016829">
    <property type="term" value="F:lyase activity"/>
    <property type="evidence" value="ECO:0007669"/>
    <property type="project" value="UniProtKB-UniRule"/>
</dbReference>
<dbReference type="GO" id="GO:0016151">
    <property type="term" value="F:nickel cation binding"/>
    <property type="evidence" value="ECO:0007669"/>
    <property type="project" value="UniProtKB-UniRule"/>
</dbReference>
<dbReference type="Gene3D" id="3.10.20.300">
    <property type="entry name" value="mk0293 like domain"/>
    <property type="match status" value="1"/>
</dbReference>
<dbReference type="Gene3D" id="3.30.70.1380">
    <property type="entry name" value="Transcriptional regulatory protein pf0864 domain like"/>
    <property type="match status" value="1"/>
</dbReference>
<dbReference type="HAMAP" id="MF_01074">
    <property type="entry name" value="LarC"/>
    <property type="match status" value="1"/>
</dbReference>
<dbReference type="InterPro" id="IPR002822">
    <property type="entry name" value="Ni_insertion"/>
</dbReference>
<dbReference type="NCBIfam" id="TIGR00299">
    <property type="entry name" value="nickel pincer cofactor biosynthesis protein LarC"/>
    <property type="match status" value="1"/>
</dbReference>
<dbReference type="PANTHER" id="PTHR36566">
    <property type="entry name" value="NICKEL INSERTION PROTEIN-RELATED"/>
    <property type="match status" value="1"/>
</dbReference>
<dbReference type="PANTHER" id="PTHR36566:SF1">
    <property type="entry name" value="PYRIDINIUM-3,5-BISTHIOCARBOXYLIC ACID MONONUCLEOTIDE NICKEL INSERTION PROTEIN"/>
    <property type="match status" value="1"/>
</dbReference>
<dbReference type="Pfam" id="PF01969">
    <property type="entry name" value="Ni_insertion"/>
    <property type="match status" value="1"/>
</dbReference>
<protein>
    <recommendedName>
        <fullName evidence="1">Putative nickel insertion protein</fullName>
    </recommendedName>
</protein>
<evidence type="ECO:0000255" key="1">
    <source>
        <dbReference type="HAMAP-Rule" id="MF_01074"/>
    </source>
</evidence>
<sequence>MKVAYFDCAAGIAGDMCLGALLDCGLPLEYLNQQLQALGLEGEYSLQVCRVQRCGQPALQAVVEVLDESPPARPWREIQALIAGSRLAPAVKARSLKVFEKLAQAEAKVHQVPLETVHFHEVGAVDALVDIVGTCVGLDWLQVERVISSPHPIGGGWVDTEHGKLAVPVPAVIELWEMGRVPVFSNGVEAELVTPTGAALAVALAEAFGPCPPLRLEKVGRGAGSRELPIPNIFRLWIGQSQGEEPTEIVSVLQTQIDDLNPQVIAYTCEQLLALGAWDVFTQPITMKQGRPGVLLTVICPPERVPECQDFIFRETTTLGIRHSQQQRTVLERRIERVETPYGLVDIKVACRHGHIVNAQPEFRDCVARAQEFRVPVQTVWLAAQAAWQKRLQGDPA</sequence>
<name>Y950_SYNJA</name>
<feature type="chain" id="PRO_1000064659" description="Putative nickel insertion protein">
    <location>
        <begin position="1"/>
        <end position="397"/>
    </location>
</feature>
<reference key="1">
    <citation type="journal article" date="2007" name="ISME J.">
        <title>Population level functional diversity in a microbial community revealed by comparative genomic and metagenomic analyses.</title>
        <authorList>
            <person name="Bhaya D."/>
            <person name="Grossman A.R."/>
            <person name="Steunou A.-S."/>
            <person name="Khuri N."/>
            <person name="Cohan F.M."/>
            <person name="Hamamura N."/>
            <person name="Melendrez M.C."/>
            <person name="Bateson M.M."/>
            <person name="Ward D.M."/>
            <person name="Heidelberg J.F."/>
        </authorList>
    </citation>
    <scope>NUCLEOTIDE SEQUENCE [LARGE SCALE GENOMIC DNA]</scope>
    <source>
        <strain>JA-3-3Ab</strain>
    </source>
</reference>